<feature type="chain" id="PRO_0000407354" description="Ras-related protein RABB1a">
    <location>
        <begin position="1"/>
        <end position="205"/>
    </location>
</feature>
<feature type="region of interest" description="Disordered" evidence="2">
    <location>
        <begin position="179"/>
        <end position="205"/>
    </location>
</feature>
<feature type="short sequence motif" description="Effector region" evidence="1">
    <location>
        <begin position="35"/>
        <end position="43"/>
    </location>
</feature>
<feature type="compositionally biased region" description="Polar residues" evidence="2">
    <location>
        <begin position="194"/>
        <end position="205"/>
    </location>
</feature>
<feature type="binding site" evidence="1">
    <location>
        <begin position="13"/>
        <end position="20"/>
    </location>
    <ligand>
        <name>GTP</name>
        <dbReference type="ChEBI" id="CHEBI:37565"/>
    </ligand>
</feature>
<feature type="binding site" evidence="1">
    <location>
        <begin position="61"/>
        <end position="65"/>
    </location>
    <ligand>
        <name>GTP</name>
        <dbReference type="ChEBI" id="CHEBI:37565"/>
    </ligand>
</feature>
<feature type="binding site" evidence="1">
    <location>
        <begin position="119"/>
        <end position="122"/>
    </location>
    <ligand>
        <name>GTP</name>
        <dbReference type="ChEBI" id="CHEBI:37565"/>
    </ligand>
</feature>
<feature type="binding site" evidence="1">
    <location>
        <begin position="149"/>
        <end position="150"/>
    </location>
    <ligand>
        <name>GTP</name>
        <dbReference type="ChEBI" id="CHEBI:37565"/>
    </ligand>
</feature>
<feature type="lipid moiety-binding region" description="S-geranylgeranyl cysteine" evidence="1">
    <location>
        <position position="203"/>
    </location>
</feature>
<feature type="lipid moiety-binding region" description="S-geranylgeranyl cysteine" evidence="1">
    <location>
        <position position="204"/>
    </location>
</feature>
<comment type="function">
    <text evidence="1">Intracellular vesicle trafficking and protein transport.</text>
</comment>
<comment type="subcellular location">
    <subcellularLocation>
        <location evidence="3">Cell membrane</location>
        <topology evidence="3">Lipid-anchor</topology>
        <orientation evidence="3">Cytoplasmic side</orientation>
    </subcellularLocation>
</comment>
<comment type="similarity">
    <text evidence="3">Belongs to the small GTPase superfamily. Rab family.</text>
</comment>
<sequence length="205" mass="22945">MSYAYRFKYIIIGDTGVGKSCLLLKFTDKRFQAVHDLTIGVEFGAKTITIDNKPIKLQIWDTAGQESFRSVTRSYYRGRAGTLLVYDITRRETFNHLASWLEEARQHASENMTTMLIGNKCDLEDKRTVSTEEGEQFAREHGLIFMEASAKTAHNVEEAFVETAATIYKRIQDGVVDEANEPGITPGPFGGKDASSSQQRRGCCG</sequence>
<accession>O23561</accession>
<gene>
    <name type="primary">RABB1A</name>
    <name type="synonym">RAB2B</name>
    <name type="ordered locus">At4g17160</name>
    <name type="ORF">dl4615c</name>
    <name type="ORF">FCAALL.364</name>
</gene>
<name>RAB1A_ARATH</name>
<proteinExistence type="evidence at transcript level"/>
<evidence type="ECO:0000250" key="1"/>
<evidence type="ECO:0000256" key="2">
    <source>
        <dbReference type="SAM" id="MobiDB-lite"/>
    </source>
</evidence>
<evidence type="ECO:0000305" key="3"/>
<keyword id="KW-1003">Cell membrane</keyword>
<keyword id="KW-0342">GTP-binding</keyword>
<keyword id="KW-0449">Lipoprotein</keyword>
<keyword id="KW-0472">Membrane</keyword>
<keyword id="KW-0547">Nucleotide-binding</keyword>
<keyword id="KW-0636">Prenylation</keyword>
<keyword id="KW-0653">Protein transport</keyword>
<keyword id="KW-1185">Reference proteome</keyword>
<keyword id="KW-0813">Transport</keyword>
<reference key="1">
    <citation type="journal article" date="1998" name="Nature">
        <title>Analysis of 1.9 Mb of contiguous sequence from chromosome 4 of Arabidopsis thaliana.</title>
        <authorList>
            <person name="Bevan M."/>
            <person name="Bancroft I."/>
            <person name="Bent E."/>
            <person name="Love K."/>
            <person name="Goodman H.M."/>
            <person name="Dean C."/>
            <person name="Bergkamp R."/>
            <person name="Dirkse W."/>
            <person name="van Staveren M."/>
            <person name="Stiekema W."/>
            <person name="Drost L."/>
            <person name="Ridley P."/>
            <person name="Hudson S.-A."/>
            <person name="Patel K."/>
            <person name="Murphy G."/>
            <person name="Piffanelli P."/>
            <person name="Wedler H."/>
            <person name="Wedler E."/>
            <person name="Wambutt R."/>
            <person name="Weitzenegger T."/>
            <person name="Pohl T."/>
            <person name="Terryn N."/>
            <person name="Gielen J."/>
            <person name="Villarroel R."/>
            <person name="De Clercq R."/>
            <person name="van Montagu M."/>
            <person name="Lecharny A."/>
            <person name="Aubourg S."/>
            <person name="Gy I."/>
            <person name="Kreis M."/>
            <person name="Lao N."/>
            <person name="Kavanagh T."/>
            <person name="Hempel S."/>
            <person name="Kotter P."/>
            <person name="Entian K.-D."/>
            <person name="Rieger M."/>
            <person name="Schaefer M."/>
            <person name="Funk B."/>
            <person name="Mueller-Auer S."/>
            <person name="Silvey M."/>
            <person name="James R."/>
            <person name="Monfort A."/>
            <person name="Pons A."/>
            <person name="Puigdomenech P."/>
            <person name="Douka A."/>
            <person name="Voukelatou E."/>
            <person name="Milioni D."/>
            <person name="Hatzopoulos P."/>
            <person name="Piravandi E."/>
            <person name="Obermaier B."/>
            <person name="Hilbert H."/>
            <person name="Duesterhoeft A."/>
            <person name="Moores T."/>
            <person name="Jones J.D.G."/>
            <person name="Eneva T."/>
            <person name="Palme K."/>
            <person name="Benes V."/>
            <person name="Rechmann S."/>
            <person name="Ansorge W."/>
            <person name="Cooke R."/>
            <person name="Berger C."/>
            <person name="Delseny M."/>
            <person name="Voet M."/>
            <person name="Volckaert G."/>
            <person name="Mewes H.-W."/>
            <person name="Klosterman S."/>
            <person name="Schueller C."/>
            <person name="Chalwatzis N."/>
        </authorList>
    </citation>
    <scope>NUCLEOTIDE SEQUENCE [LARGE SCALE GENOMIC DNA]</scope>
    <source>
        <strain>cv. Columbia</strain>
    </source>
</reference>
<reference key="2">
    <citation type="journal article" date="1999" name="Nature">
        <title>Sequence and analysis of chromosome 4 of the plant Arabidopsis thaliana.</title>
        <authorList>
            <person name="Mayer K.F.X."/>
            <person name="Schueller C."/>
            <person name="Wambutt R."/>
            <person name="Murphy G."/>
            <person name="Volckaert G."/>
            <person name="Pohl T."/>
            <person name="Duesterhoeft A."/>
            <person name="Stiekema W."/>
            <person name="Entian K.-D."/>
            <person name="Terryn N."/>
            <person name="Harris B."/>
            <person name="Ansorge W."/>
            <person name="Brandt P."/>
            <person name="Grivell L.A."/>
            <person name="Rieger M."/>
            <person name="Weichselgartner M."/>
            <person name="de Simone V."/>
            <person name="Obermaier B."/>
            <person name="Mache R."/>
            <person name="Mueller M."/>
            <person name="Kreis M."/>
            <person name="Delseny M."/>
            <person name="Puigdomenech P."/>
            <person name="Watson M."/>
            <person name="Schmidtheini T."/>
            <person name="Reichert B."/>
            <person name="Portetelle D."/>
            <person name="Perez-Alonso M."/>
            <person name="Boutry M."/>
            <person name="Bancroft I."/>
            <person name="Vos P."/>
            <person name="Hoheisel J."/>
            <person name="Zimmermann W."/>
            <person name="Wedler H."/>
            <person name="Ridley P."/>
            <person name="Langham S.-A."/>
            <person name="McCullagh B."/>
            <person name="Bilham L."/>
            <person name="Robben J."/>
            <person name="van der Schueren J."/>
            <person name="Grymonprez B."/>
            <person name="Chuang Y.-J."/>
            <person name="Vandenbussche F."/>
            <person name="Braeken M."/>
            <person name="Weltjens I."/>
            <person name="Voet M."/>
            <person name="Bastiaens I."/>
            <person name="Aert R."/>
            <person name="Defoor E."/>
            <person name="Weitzenegger T."/>
            <person name="Bothe G."/>
            <person name="Ramsperger U."/>
            <person name="Hilbert H."/>
            <person name="Braun M."/>
            <person name="Holzer E."/>
            <person name="Brandt A."/>
            <person name="Peters S."/>
            <person name="van Staveren M."/>
            <person name="Dirkse W."/>
            <person name="Mooijman P."/>
            <person name="Klein Lankhorst R."/>
            <person name="Rose M."/>
            <person name="Hauf J."/>
            <person name="Koetter P."/>
            <person name="Berneiser S."/>
            <person name="Hempel S."/>
            <person name="Feldpausch M."/>
            <person name="Lamberth S."/>
            <person name="Van den Daele H."/>
            <person name="De Keyser A."/>
            <person name="Buysshaert C."/>
            <person name="Gielen J."/>
            <person name="Villarroel R."/>
            <person name="De Clercq R."/>
            <person name="van Montagu M."/>
            <person name="Rogers J."/>
            <person name="Cronin A."/>
            <person name="Quail M.A."/>
            <person name="Bray-Allen S."/>
            <person name="Clark L."/>
            <person name="Doggett J."/>
            <person name="Hall S."/>
            <person name="Kay M."/>
            <person name="Lennard N."/>
            <person name="McLay K."/>
            <person name="Mayes R."/>
            <person name="Pettett A."/>
            <person name="Rajandream M.A."/>
            <person name="Lyne M."/>
            <person name="Benes V."/>
            <person name="Rechmann S."/>
            <person name="Borkova D."/>
            <person name="Bloecker H."/>
            <person name="Scharfe M."/>
            <person name="Grimm M."/>
            <person name="Loehnert T.-H."/>
            <person name="Dose S."/>
            <person name="de Haan M."/>
            <person name="Maarse A.C."/>
            <person name="Schaefer M."/>
            <person name="Mueller-Auer S."/>
            <person name="Gabel C."/>
            <person name="Fuchs M."/>
            <person name="Fartmann B."/>
            <person name="Granderath K."/>
            <person name="Dauner D."/>
            <person name="Herzl A."/>
            <person name="Neumann S."/>
            <person name="Argiriou A."/>
            <person name="Vitale D."/>
            <person name="Liguori R."/>
            <person name="Piravandi E."/>
            <person name="Massenet O."/>
            <person name="Quigley F."/>
            <person name="Clabauld G."/>
            <person name="Muendlein A."/>
            <person name="Felber R."/>
            <person name="Schnabl S."/>
            <person name="Hiller R."/>
            <person name="Schmidt W."/>
            <person name="Lecharny A."/>
            <person name="Aubourg S."/>
            <person name="Chefdor F."/>
            <person name="Cooke R."/>
            <person name="Berger C."/>
            <person name="Monfort A."/>
            <person name="Casacuberta E."/>
            <person name="Gibbons T."/>
            <person name="Weber N."/>
            <person name="Vandenbol M."/>
            <person name="Bargues M."/>
            <person name="Terol J."/>
            <person name="Torres A."/>
            <person name="Perez-Perez A."/>
            <person name="Purnelle B."/>
            <person name="Bent E."/>
            <person name="Johnson S."/>
            <person name="Tacon D."/>
            <person name="Jesse T."/>
            <person name="Heijnen L."/>
            <person name="Schwarz S."/>
            <person name="Scholler P."/>
            <person name="Heber S."/>
            <person name="Francs P."/>
            <person name="Bielke C."/>
            <person name="Frishman D."/>
            <person name="Haase D."/>
            <person name="Lemcke K."/>
            <person name="Mewes H.-W."/>
            <person name="Stocker S."/>
            <person name="Zaccaria P."/>
            <person name="Bevan M."/>
            <person name="Wilson R.K."/>
            <person name="de la Bastide M."/>
            <person name="Habermann K."/>
            <person name="Parnell L."/>
            <person name="Dedhia N."/>
            <person name="Gnoj L."/>
            <person name="Schutz K."/>
            <person name="Huang E."/>
            <person name="Spiegel L."/>
            <person name="Sekhon M."/>
            <person name="Murray J."/>
            <person name="Sheet P."/>
            <person name="Cordes M."/>
            <person name="Abu-Threideh J."/>
            <person name="Stoneking T."/>
            <person name="Kalicki J."/>
            <person name="Graves T."/>
            <person name="Harmon G."/>
            <person name="Edwards J."/>
            <person name="Latreille P."/>
            <person name="Courtney L."/>
            <person name="Cloud J."/>
            <person name="Abbott A."/>
            <person name="Scott K."/>
            <person name="Johnson D."/>
            <person name="Minx P."/>
            <person name="Bentley D."/>
            <person name="Fulton B."/>
            <person name="Miller N."/>
            <person name="Greco T."/>
            <person name="Kemp K."/>
            <person name="Kramer J."/>
            <person name="Fulton L."/>
            <person name="Mardis E."/>
            <person name="Dante M."/>
            <person name="Pepin K."/>
            <person name="Hillier L.W."/>
            <person name="Nelson J."/>
            <person name="Spieth J."/>
            <person name="Ryan E."/>
            <person name="Andrews S."/>
            <person name="Geisel C."/>
            <person name="Layman D."/>
            <person name="Du H."/>
            <person name="Ali J."/>
            <person name="Berghoff A."/>
            <person name="Jones K."/>
            <person name="Drone K."/>
            <person name="Cotton M."/>
            <person name="Joshu C."/>
            <person name="Antonoiu B."/>
            <person name="Zidanic M."/>
            <person name="Strong C."/>
            <person name="Sun H."/>
            <person name="Lamar B."/>
            <person name="Yordan C."/>
            <person name="Ma P."/>
            <person name="Zhong J."/>
            <person name="Preston R."/>
            <person name="Vil D."/>
            <person name="Shekher M."/>
            <person name="Matero A."/>
            <person name="Shah R."/>
            <person name="Swaby I.K."/>
            <person name="O'Shaughnessy A."/>
            <person name="Rodriguez M."/>
            <person name="Hoffman J."/>
            <person name="Till S."/>
            <person name="Granat S."/>
            <person name="Shohdy N."/>
            <person name="Hasegawa A."/>
            <person name="Hameed A."/>
            <person name="Lodhi M."/>
            <person name="Johnson A."/>
            <person name="Chen E."/>
            <person name="Marra M.A."/>
            <person name="Martienssen R."/>
            <person name="McCombie W.R."/>
        </authorList>
    </citation>
    <scope>NUCLEOTIDE SEQUENCE [LARGE SCALE GENOMIC DNA]</scope>
    <source>
        <strain>cv. Columbia</strain>
    </source>
</reference>
<reference key="3">
    <citation type="journal article" date="2017" name="Plant J.">
        <title>Araport11: a complete reannotation of the Arabidopsis thaliana reference genome.</title>
        <authorList>
            <person name="Cheng C.Y."/>
            <person name="Krishnakumar V."/>
            <person name="Chan A.P."/>
            <person name="Thibaud-Nissen F."/>
            <person name="Schobel S."/>
            <person name="Town C.D."/>
        </authorList>
    </citation>
    <scope>GENOME REANNOTATION</scope>
    <source>
        <strain>cv. Columbia</strain>
    </source>
</reference>
<reference key="4">
    <citation type="submission" date="2005-05" db="EMBL/GenBank/DDBJ databases">
        <authorList>
            <person name="Underwood B.A."/>
            <person name="Xiao Y.-L."/>
            <person name="Moskal W.A. Jr."/>
            <person name="Monaghan E.L."/>
            <person name="Wang W."/>
            <person name="Redman J.C."/>
            <person name="Wu H.C."/>
            <person name="Utterback T."/>
            <person name="Town C.D."/>
        </authorList>
    </citation>
    <scope>NUCLEOTIDE SEQUENCE [LARGE SCALE MRNA]</scope>
    <source>
        <strain>cv. Columbia</strain>
    </source>
</reference>
<reference key="5">
    <citation type="journal article" date="2003" name="Plant Physiol.">
        <title>Analysis of the small GTPase gene superfamily of Arabidopsis.</title>
        <authorList>
            <person name="Vernoud V."/>
            <person name="Horton A.C."/>
            <person name="Yang Z."/>
            <person name="Nielsen E."/>
        </authorList>
    </citation>
    <scope>GENE FAMILY</scope>
    <scope>NOMENCLATURE</scope>
</reference>
<dbReference type="EMBL" id="Z97343">
    <property type="protein sequence ID" value="CAB10497.1"/>
    <property type="molecule type" value="Genomic_DNA"/>
</dbReference>
<dbReference type="EMBL" id="AL161545">
    <property type="protein sequence ID" value="CAB80987.1"/>
    <property type="molecule type" value="Genomic_DNA"/>
</dbReference>
<dbReference type="EMBL" id="CP002687">
    <property type="protein sequence ID" value="AEE83856.1"/>
    <property type="molecule type" value="Genomic_DNA"/>
</dbReference>
<dbReference type="EMBL" id="DQ056652">
    <property type="protein sequence ID" value="AAY78799.1"/>
    <property type="molecule type" value="mRNA"/>
</dbReference>
<dbReference type="PIR" id="D71440">
    <property type="entry name" value="D71440"/>
</dbReference>
<dbReference type="RefSeq" id="NP_193449.1">
    <property type="nucleotide sequence ID" value="NM_117820.2"/>
</dbReference>
<dbReference type="SMR" id="O23561"/>
<dbReference type="FunCoup" id="O23561">
    <property type="interactions" value="1843"/>
</dbReference>
<dbReference type="STRING" id="3702.O23561"/>
<dbReference type="iPTMnet" id="O23561"/>
<dbReference type="PaxDb" id="3702-AT4G17160.1"/>
<dbReference type="ProteomicsDB" id="236496"/>
<dbReference type="EnsemblPlants" id="AT4G17160.1">
    <property type="protein sequence ID" value="AT4G17160.1"/>
    <property type="gene ID" value="AT4G17160"/>
</dbReference>
<dbReference type="GeneID" id="827427"/>
<dbReference type="Gramene" id="AT4G17160.1">
    <property type="protein sequence ID" value="AT4G17160.1"/>
    <property type="gene ID" value="AT4G17160"/>
</dbReference>
<dbReference type="KEGG" id="ath:AT4G17160"/>
<dbReference type="Araport" id="AT4G17160"/>
<dbReference type="TAIR" id="AT4G17160">
    <property type="gene designation" value="RABB1A"/>
</dbReference>
<dbReference type="eggNOG" id="KOG0098">
    <property type="taxonomic scope" value="Eukaryota"/>
</dbReference>
<dbReference type="HOGENOM" id="CLU_041217_23_1_1"/>
<dbReference type="InParanoid" id="O23561"/>
<dbReference type="OMA" id="MSYAYRF"/>
<dbReference type="PhylomeDB" id="O23561"/>
<dbReference type="PRO" id="PR:O23561"/>
<dbReference type="Proteomes" id="UP000006548">
    <property type="component" value="Chromosome 4"/>
</dbReference>
<dbReference type="ExpressionAtlas" id="O23561">
    <property type="expression patterns" value="baseline and differential"/>
</dbReference>
<dbReference type="GO" id="GO:0005886">
    <property type="term" value="C:plasma membrane"/>
    <property type="evidence" value="ECO:0007669"/>
    <property type="project" value="UniProtKB-SubCell"/>
</dbReference>
<dbReference type="GO" id="GO:0005525">
    <property type="term" value="F:GTP binding"/>
    <property type="evidence" value="ECO:0007669"/>
    <property type="project" value="UniProtKB-KW"/>
</dbReference>
<dbReference type="GO" id="GO:0003924">
    <property type="term" value="F:GTPase activity"/>
    <property type="evidence" value="ECO:0007669"/>
    <property type="project" value="InterPro"/>
</dbReference>
<dbReference type="GO" id="GO:0015031">
    <property type="term" value="P:protein transport"/>
    <property type="evidence" value="ECO:0007669"/>
    <property type="project" value="UniProtKB-KW"/>
</dbReference>
<dbReference type="CDD" id="cd01866">
    <property type="entry name" value="Rab2"/>
    <property type="match status" value="1"/>
</dbReference>
<dbReference type="FunFam" id="3.40.50.300:FF:000263">
    <property type="entry name" value="Ras-related protein RABB1c"/>
    <property type="match status" value="1"/>
</dbReference>
<dbReference type="Gene3D" id="3.40.50.300">
    <property type="entry name" value="P-loop containing nucleotide triphosphate hydrolases"/>
    <property type="match status" value="1"/>
</dbReference>
<dbReference type="InterPro" id="IPR027417">
    <property type="entry name" value="P-loop_NTPase"/>
</dbReference>
<dbReference type="InterPro" id="IPR050209">
    <property type="entry name" value="Rab_GTPases_membrane_traffic"/>
</dbReference>
<dbReference type="InterPro" id="IPR005225">
    <property type="entry name" value="Small_GTP-bd"/>
</dbReference>
<dbReference type="InterPro" id="IPR001806">
    <property type="entry name" value="Small_GTPase"/>
</dbReference>
<dbReference type="NCBIfam" id="TIGR00231">
    <property type="entry name" value="small_GTP"/>
    <property type="match status" value="1"/>
</dbReference>
<dbReference type="PANTHER" id="PTHR47979">
    <property type="entry name" value="DRAB11-RELATED"/>
    <property type="match status" value="1"/>
</dbReference>
<dbReference type="Pfam" id="PF00071">
    <property type="entry name" value="Ras"/>
    <property type="match status" value="1"/>
</dbReference>
<dbReference type="PRINTS" id="PR00449">
    <property type="entry name" value="RASTRNSFRMNG"/>
</dbReference>
<dbReference type="SMART" id="SM00175">
    <property type="entry name" value="RAB"/>
    <property type="match status" value="1"/>
</dbReference>
<dbReference type="SMART" id="SM00176">
    <property type="entry name" value="RAN"/>
    <property type="match status" value="1"/>
</dbReference>
<dbReference type="SMART" id="SM00173">
    <property type="entry name" value="RAS"/>
    <property type="match status" value="1"/>
</dbReference>
<dbReference type="SMART" id="SM00174">
    <property type="entry name" value="RHO"/>
    <property type="match status" value="1"/>
</dbReference>
<dbReference type="SUPFAM" id="SSF52540">
    <property type="entry name" value="P-loop containing nucleoside triphosphate hydrolases"/>
    <property type="match status" value="1"/>
</dbReference>
<dbReference type="PROSITE" id="PS51419">
    <property type="entry name" value="RAB"/>
    <property type="match status" value="1"/>
</dbReference>
<organism>
    <name type="scientific">Arabidopsis thaliana</name>
    <name type="common">Mouse-ear cress</name>
    <dbReference type="NCBI Taxonomy" id="3702"/>
    <lineage>
        <taxon>Eukaryota</taxon>
        <taxon>Viridiplantae</taxon>
        <taxon>Streptophyta</taxon>
        <taxon>Embryophyta</taxon>
        <taxon>Tracheophyta</taxon>
        <taxon>Spermatophyta</taxon>
        <taxon>Magnoliopsida</taxon>
        <taxon>eudicotyledons</taxon>
        <taxon>Gunneridae</taxon>
        <taxon>Pentapetalae</taxon>
        <taxon>rosids</taxon>
        <taxon>malvids</taxon>
        <taxon>Brassicales</taxon>
        <taxon>Brassicaceae</taxon>
        <taxon>Camelineae</taxon>
        <taxon>Arabidopsis</taxon>
    </lineage>
</organism>
<protein>
    <recommendedName>
        <fullName>Ras-related protein RABB1a</fullName>
        <shortName>AtRABB1a</shortName>
    </recommendedName>
    <alternativeName>
        <fullName>Ras-related protein Rab2B</fullName>
        <shortName>AtRab2B</shortName>
    </alternativeName>
</protein>